<gene>
    <name evidence="1" type="primary">rplS</name>
    <name type="ordered locus">Ajs_3352</name>
</gene>
<name>RL19_ACISJ</name>
<reference key="1">
    <citation type="submission" date="2006-12" db="EMBL/GenBank/DDBJ databases">
        <title>Complete sequence of chromosome 1 of Acidovorax sp. JS42.</title>
        <authorList>
            <person name="Copeland A."/>
            <person name="Lucas S."/>
            <person name="Lapidus A."/>
            <person name="Barry K."/>
            <person name="Detter J.C."/>
            <person name="Glavina del Rio T."/>
            <person name="Dalin E."/>
            <person name="Tice H."/>
            <person name="Pitluck S."/>
            <person name="Chertkov O."/>
            <person name="Brettin T."/>
            <person name="Bruce D."/>
            <person name="Han C."/>
            <person name="Tapia R."/>
            <person name="Gilna P."/>
            <person name="Schmutz J."/>
            <person name="Larimer F."/>
            <person name="Land M."/>
            <person name="Hauser L."/>
            <person name="Kyrpides N."/>
            <person name="Kim E."/>
            <person name="Stahl D."/>
            <person name="Richardson P."/>
        </authorList>
    </citation>
    <scope>NUCLEOTIDE SEQUENCE [LARGE SCALE GENOMIC DNA]</scope>
    <source>
        <strain>JS42</strain>
    </source>
</reference>
<comment type="function">
    <text evidence="1">This protein is located at the 30S-50S ribosomal subunit interface and may play a role in the structure and function of the aminoacyl-tRNA binding site.</text>
</comment>
<comment type="similarity">
    <text evidence="1">Belongs to the bacterial ribosomal protein bL19 family.</text>
</comment>
<sequence length="127" mass="14156">MNLIQILEQEEIARLNKTIPSFAPGDTVIVNVNVVEGTRKRVQAYEGVVIAKRNRGLNSGFTVRKISSGEGVERTFQTYSPLIASIEVKRRGDVRRAKLYYLRERSGKSARIKEKLPSRVKAAAVAA</sequence>
<organism>
    <name type="scientific">Acidovorax sp. (strain JS42)</name>
    <dbReference type="NCBI Taxonomy" id="232721"/>
    <lineage>
        <taxon>Bacteria</taxon>
        <taxon>Pseudomonadati</taxon>
        <taxon>Pseudomonadota</taxon>
        <taxon>Betaproteobacteria</taxon>
        <taxon>Burkholderiales</taxon>
        <taxon>Comamonadaceae</taxon>
        <taxon>Acidovorax</taxon>
    </lineage>
</organism>
<dbReference type="EMBL" id="CP000539">
    <property type="protein sequence ID" value="ABM43474.1"/>
    <property type="molecule type" value="Genomic_DNA"/>
</dbReference>
<dbReference type="SMR" id="A1WB49"/>
<dbReference type="STRING" id="232721.Ajs_3352"/>
<dbReference type="KEGG" id="ajs:Ajs_3352"/>
<dbReference type="eggNOG" id="COG0335">
    <property type="taxonomic scope" value="Bacteria"/>
</dbReference>
<dbReference type="HOGENOM" id="CLU_103507_1_0_4"/>
<dbReference type="Proteomes" id="UP000000645">
    <property type="component" value="Chromosome"/>
</dbReference>
<dbReference type="GO" id="GO:0022625">
    <property type="term" value="C:cytosolic large ribosomal subunit"/>
    <property type="evidence" value="ECO:0007669"/>
    <property type="project" value="TreeGrafter"/>
</dbReference>
<dbReference type="GO" id="GO:0003735">
    <property type="term" value="F:structural constituent of ribosome"/>
    <property type="evidence" value="ECO:0007669"/>
    <property type="project" value="InterPro"/>
</dbReference>
<dbReference type="GO" id="GO:0006412">
    <property type="term" value="P:translation"/>
    <property type="evidence" value="ECO:0007669"/>
    <property type="project" value="UniProtKB-UniRule"/>
</dbReference>
<dbReference type="FunFam" id="2.30.30.790:FF:000001">
    <property type="entry name" value="50S ribosomal protein L19"/>
    <property type="match status" value="1"/>
</dbReference>
<dbReference type="Gene3D" id="2.30.30.790">
    <property type="match status" value="1"/>
</dbReference>
<dbReference type="HAMAP" id="MF_00402">
    <property type="entry name" value="Ribosomal_bL19"/>
    <property type="match status" value="1"/>
</dbReference>
<dbReference type="InterPro" id="IPR001857">
    <property type="entry name" value="Ribosomal_bL19"/>
</dbReference>
<dbReference type="InterPro" id="IPR018257">
    <property type="entry name" value="Ribosomal_bL19_CS"/>
</dbReference>
<dbReference type="InterPro" id="IPR038657">
    <property type="entry name" value="Ribosomal_bL19_sf"/>
</dbReference>
<dbReference type="InterPro" id="IPR008991">
    <property type="entry name" value="Translation_prot_SH3-like_sf"/>
</dbReference>
<dbReference type="NCBIfam" id="TIGR01024">
    <property type="entry name" value="rplS_bact"/>
    <property type="match status" value="1"/>
</dbReference>
<dbReference type="PANTHER" id="PTHR15680:SF9">
    <property type="entry name" value="LARGE RIBOSOMAL SUBUNIT PROTEIN BL19M"/>
    <property type="match status" value="1"/>
</dbReference>
<dbReference type="PANTHER" id="PTHR15680">
    <property type="entry name" value="RIBOSOMAL PROTEIN L19"/>
    <property type="match status" value="1"/>
</dbReference>
<dbReference type="Pfam" id="PF01245">
    <property type="entry name" value="Ribosomal_L19"/>
    <property type="match status" value="1"/>
</dbReference>
<dbReference type="PIRSF" id="PIRSF002191">
    <property type="entry name" value="Ribosomal_L19"/>
    <property type="match status" value="1"/>
</dbReference>
<dbReference type="PRINTS" id="PR00061">
    <property type="entry name" value="RIBOSOMALL19"/>
</dbReference>
<dbReference type="SUPFAM" id="SSF50104">
    <property type="entry name" value="Translation proteins SH3-like domain"/>
    <property type="match status" value="1"/>
</dbReference>
<dbReference type="PROSITE" id="PS01015">
    <property type="entry name" value="RIBOSOMAL_L19"/>
    <property type="match status" value="1"/>
</dbReference>
<evidence type="ECO:0000255" key="1">
    <source>
        <dbReference type="HAMAP-Rule" id="MF_00402"/>
    </source>
</evidence>
<evidence type="ECO:0000305" key="2"/>
<feature type="chain" id="PRO_1000049627" description="Large ribosomal subunit protein bL19">
    <location>
        <begin position="1"/>
        <end position="127"/>
    </location>
</feature>
<keyword id="KW-0687">Ribonucleoprotein</keyword>
<keyword id="KW-0689">Ribosomal protein</keyword>
<accession>A1WB49</accession>
<protein>
    <recommendedName>
        <fullName evidence="1">Large ribosomal subunit protein bL19</fullName>
    </recommendedName>
    <alternativeName>
        <fullName evidence="2">50S ribosomal protein L19</fullName>
    </alternativeName>
</protein>
<proteinExistence type="inferred from homology"/>